<keyword id="KW-0963">Cytoplasm</keyword>
<keyword id="KW-0448">Lipopolysaccharide biosynthesis</keyword>
<keyword id="KW-0548">Nucleotidyltransferase</keyword>
<keyword id="KW-0808">Transferase</keyword>
<accession>Q4UV63</accession>
<feature type="chain" id="PRO_1000091912" description="3-deoxy-manno-octulosonate cytidylyltransferase">
    <location>
        <begin position="1"/>
        <end position="250"/>
    </location>
</feature>
<gene>
    <name evidence="1" type="primary">kdsB</name>
    <name type="ordered locus">XC_1997</name>
</gene>
<proteinExistence type="inferred from homology"/>
<evidence type="ECO:0000255" key="1">
    <source>
        <dbReference type="HAMAP-Rule" id="MF_00057"/>
    </source>
</evidence>
<comment type="function">
    <text evidence="1">Activates KDO (a required 8-carbon sugar) for incorporation into bacterial lipopolysaccharide in Gram-negative bacteria.</text>
</comment>
<comment type="catalytic activity">
    <reaction evidence="1">
        <text>3-deoxy-alpha-D-manno-oct-2-ulosonate + CTP = CMP-3-deoxy-beta-D-manno-octulosonate + diphosphate</text>
        <dbReference type="Rhea" id="RHEA:23448"/>
        <dbReference type="ChEBI" id="CHEBI:33019"/>
        <dbReference type="ChEBI" id="CHEBI:37563"/>
        <dbReference type="ChEBI" id="CHEBI:85986"/>
        <dbReference type="ChEBI" id="CHEBI:85987"/>
        <dbReference type="EC" id="2.7.7.38"/>
    </reaction>
</comment>
<comment type="pathway">
    <text evidence="1">Nucleotide-sugar biosynthesis; CMP-3-deoxy-D-manno-octulosonate biosynthesis; CMP-3-deoxy-D-manno-octulosonate from 3-deoxy-D-manno-octulosonate and CTP: step 1/1.</text>
</comment>
<comment type="pathway">
    <text evidence="1">Bacterial outer membrane biogenesis; lipopolysaccharide biosynthesis.</text>
</comment>
<comment type="subcellular location">
    <subcellularLocation>
        <location evidence="1">Cytoplasm</location>
    </subcellularLocation>
</comment>
<comment type="similarity">
    <text evidence="1">Belongs to the KdsB family.</text>
</comment>
<sequence length="250" mass="26852">MVAVPARYASTRLPGKPLQLIGDRPMIQHVAERALAAGAREVWVATDDARIAEAIQGLAGVRVAMTSSVHLSGTDRLAECARIAGWDAATCVVNLQGDEPFAPAAGIRAVAQVLQRSGAEMATLAAPVDSAHDLFDPNVVKLVRNAHGDALYFSRAPIPWHRDSFAAQRDAVPAGNHWLRHIGIYAYRAGFLQQFAAMPPGTLERIESLEQLRVLEAGYRIAVALTPEQFPPGIDTPEDLQRAQAQLASA</sequence>
<dbReference type="EC" id="2.7.7.38" evidence="1"/>
<dbReference type="EMBL" id="CP000050">
    <property type="protein sequence ID" value="AAY49060.1"/>
    <property type="molecule type" value="Genomic_DNA"/>
</dbReference>
<dbReference type="SMR" id="Q4UV63"/>
<dbReference type="KEGG" id="xcb:XC_1997"/>
<dbReference type="HOGENOM" id="CLU_065038_1_0_6"/>
<dbReference type="UniPathway" id="UPA00030"/>
<dbReference type="UniPathway" id="UPA00358">
    <property type="reaction ID" value="UER00476"/>
</dbReference>
<dbReference type="Proteomes" id="UP000000420">
    <property type="component" value="Chromosome"/>
</dbReference>
<dbReference type="GO" id="GO:0005829">
    <property type="term" value="C:cytosol"/>
    <property type="evidence" value="ECO:0007669"/>
    <property type="project" value="TreeGrafter"/>
</dbReference>
<dbReference type="GO" id="GO:0008690">
    <property type="term" value="F:3-deoxy-manno-octulosonate cytidylyltransferase activity"/>
    <property type="evidence" value="ECO:0007669"/>
    <property type="project" value="UniProtKB-UniRule"/>
</dbReference>
<dbReference type="GO" id="GO:0033468">
    <property type="term" value="P:CMP-keto-3-deoxy-D-manno-octulosonic acid biosynthetic process"/>
    <property type="evidence" value="ECO:0007669"/>
    <property type="project" value="UniProtKB-UniRule"/>
</dbReference>
<dbReference type="GO" id="GO:0009103">
    <property type="term" value="P:lipopolysaccharide biosynthetic process"/>
    <property type="evidence" value="ECO:0007669"/>
    <property type="project" value="UniProtKB-UniRule"/>
</dbReference>
<dbReference type="CDD" id="cd02517">
    <property type="entry name" value="CMP-KDO-Synthetase"/>
    <property type="match status" value="1"/>
</dbReference>
<dbReference type="FunFam" id="3.90.550.10:FF:000011">
    <property type="entry name" value="3-deoxy-manno-octulosonate cytidylyltransferase"/>
    <property type="match status" value="1"/>
</dbReference>
<dbReference type="Gene3D" id="3.90.550.10">
    <property type="entry name" value="Spore Coat Polysaccharide Biosynthesis Protein SpsA, Chain A"/>
    <property type="match status" value="1"/>
</dbReference>
<dbReference type="HAMAP" id="MF_00057">
    <property type="entry name" value="KdsB"/>
    <property type="match status" value="1"/>
</dbReference>
<dbReference type="InterPro" id="IPR003329">
    <property type="entry name" value="Cytidylyl_trans"/>
</dbReference>
<dbReference type="InterPro" id="IPR004528">
    <property type="entry name" value="KdsB"/>
</dbReference>
<dbReference type="InterPro" id="IPR029044">
    <property type="entry name" value="Nucleotide-diphossugar_trans"/>
</dbReference>
<dbReference type="NCBIfam" id="TIGR00466">
    <property type="entry name" value="kdsB"/>
    <property type="match status" value="1"/>
</dbReference>
<dbReference type="NCBIfam" id="NF003952">
    <property type="entry name" value="PRK05450.1-5"/>
    <property type="match status" value="1"/>
</dbReference>
<dbReference type="NCBIfam" id="NF009905">
    <property type="entry name" value="PRK13368.1"/>
    <property type="match status" value="1"/>
</dbReference>
<dbReference type="PANTHER" id="PTHR42866">
    <property type="entry name" value="3-DEOXY-MANNO-OCTULOSONATE CYTIDYLYLTRANSFERASE"/>
    <property type="match status" value="1"/>
</dbReference>
<dbReference type="PANTHER" id="PTHR42866:SF2">
    <property type="entry name" value="3-DEOXY-MANNO-OCTULOSONATE CYTIDYLYLTRANSFERASE, MITOCHONDRIAL"/>
    <property type="match status" value="1"/>
</dbReference>
<dbReference type="Pfam" id="PF02348">
    <property type="entry name" value="CTP_transf_3"/>
    <property type="match status" value="1"/>
</dbReference>
<dbReference type="SUPFAM" id="SSF53448">
    <property type="entry name" value="Nucleotide-diphospho-sugar transferases"/>
    <property type="match status" value="1"/>
</dbReference>
<protein>
    <recommendedName>
        <fullName evidence="1">3-deoxy-manno-octulosonate cytidylyltransferase</fullName>
        <ecNumber evidence="1">2.7.7.38</ecNumber>
    </recommendedName>
    <alternativeName>
        <fullName evidence="1">CMP-2-keto-3-deoxyoctulosonic acid synthase</fullName>
        <shortName evidence="1">CKS</shortName>
        <shortName evidence="1">CMP-KDO synthase</shortName>
    </alternativeName>
</protein>
<organism>
    <name type="scientific">Xanthomonas campestris pv. campestris (strain 8004)</name>
    <dbReference type="NCBI Taxonomy" id="314565"/>
    <lineage>
        <taxon>Bacteria</taxon>
        <taxon>Pseudomonadati</taxon>
        <taxon>Pseudomonadota</taxon>
        <taxon>Gammaproteobacteria</taxon>
        <taxon>Lysobacterales</taxon>
        <taxon>Lysobacteraceae</taxon>
        <taxon>Xanthomonas</taxon>
    </lineage>
</organism>
<reference key="1">
    <citation type="journal article" date="2005" name="Genome Res.">
        <title>Comparative and functional genomic analyses of the pathogenicity of phytopathogen Xanthomonas campestris pv. campestris.</title>
        <authorList>
            <person name="Qian W."/>
            <person name="Jia Y."/>
            <person name="Ren S.-X."/>
            <person name="He Y.-Q."/>
            <person name="Feng J.-X."/>
            <person name="Lu L.-F."/>
            <person name="Sun Q."/>
            <person name="Ying G."/>
            <person name="Tang D.-J."/>
            <person name="Tang H."/>
            <person name="Wu W."/>
            <person name="Hao P."/>
            <person name="Wang L."/>
            <person name="Jiang B.-L."/>
            <person name="Zeng S."/>
            <person name="Gu W.-Y."/>
            <person name="Lu G."/>
            <person name="Rong L."/>
            <person name="Tian Y."/>
            <person name="Yao Z."/>
            <person name="Fu G."/>
            <person name="Chen B."/>
            <person name="Fang R."/>
            <person name="Qiang B."/>
            <person name="Chen Z."/>
            <person name="Zhao G.-P."/>
            <person name="Tang J.-L."/>
            <person name="He C."/>
        </authorList>
    </citation>
    <scope>NUCLEOTIDE SEQUENCE [LARGE SCALE GENOMIC DNA]</scope>
    <source>
        <strain>8004</strain>
    </source>
</reference>
<name>KDSB_XANC8</name>